<organism>
    <name type="scientific">Desulfatibacillum aliphaticivorans</name>
    <dbReference type="NCBI Taxonomy" id="218208"/>
    <lineage>
        <taxon>Bacteria</taxon>
        <taxon>Pseudomonadati</taxon>
        <taxon>Thermodesulfobacteriota</taxon>
        <taxon>Desulfobacteria</taxon>
        <taxon>Desulfobacterales</taxon>
        <taxon>Desulfatibacillaceae</taxon>
        <taxon>Desulfatibacillum</taxon>
    </lineage>
</organism>
<gene>
    <name evidence="1" type="primary">rplF</name>
    <name type="ordered locus">Dalk_1900</name>
</gene>
<protein>
    <recommendedName>
        <fullName evidence="1">Large ribosomal subunit protein uL6</fullName>
    </recommendedName>
    <alternativeName>
        <fullName evidence="2">50S ribosomal protein L6</fullName>
    </alternativeName>
</protein>
<proteinExistence type="inferred from homology"/>
<accession>B8FES0</accession>
<keyword id="KW-1185">Reference proteome</keyword>
<keyword id="KW-0687">Ribonucleoprotein</keyword>
<keyword id="KW-0689">Ribosomal protein</keyword>
<keyword id="KW-0694">RNA-binding</keyword>
<keyword id="KW-0699">rRNA-binding</keyword>
<reference key="1">
    <citation type="journal article" date="2012" name="Environ. Microbiol.">
        <title>The genome sequence of Desulfatibacillum alkenivorans AK-01: a blueprint for anaerobic alkane oxidation.</title>
        <authorList>
            <person name="Callaghan A.V."/>
            <person name="Morris B.E."/>
            <person name="Pereira I.A."/>
            <person name="McInerney M.J."/>
            <person name="Austin R.N."/>
            <person name="Groves J.T."/>
            <person name="Kukor J.J."/>
            <person name="Suflita J.M."/>
            <person name="Young L.Y."/>
            <person name="Zylstra G.J."/>
            <person name="Wawrik B."/>
        </authorList>
    </citation>
    <scope>NUCLEOTIDE SEQUENCE [LARGE SCALE GENOMIC DNA]</scope>
    <source>
        <strain>AK-01</strain>
    </source>
</reference>
<comment type="function">
    <text evidence="1">This protein binds to the 23S rRNA, and is important in its secondary structure. It is located near the subunit interface in the base of the L7/L12 stalk, and near the tRNA binding site of the peptidyltransferase center.</text>
</comment>
<comment type="subunit">
    <text evidence="1">Part of the 50S ribosomal subunit.</text>
</comment>
<comment type="similarity">
    <text evidence="1">Belongs to the universal ribosomal protein uL6 family.</text>
</comment>
<evidence type="ECO:0000255" key="1">
    <source>
        <dbReference type="HAMAP-Rule" id="MF_01365"/>
    </source>
</evidence>
<evidence type="ECO:0000305" key="2"/>
<sequence>MSRVGKKPIPIPAKTKVTVSNGTVTVQGEKGKLERPLHPDVELKIEGDEITVVPVVERRKITAVQGLVRSLVANMVTGVSTGFKRVLEVNGIGYKAELNGQTLNLTLGFSHPVDFPLPQGITAEVDKKNNITLEGIDNELLGQTAASIRALRPPEPYKGKGIKYAEERIIRKAGKTGA</sequence>
<name>RL6_DESAL</name>
<feature type="chain" id="PRO_1000143975" description="Large ribosomal subunit protein uL6">
    <location>
        <begin position="1"/>
        <end position="178"/>
    </location>
</feature>
<dbReference type="EMBL" id="CP001322">
    <property type="protein sequence ID" value="ACL03597.1"/>
    <property type="molecule type" value="Genomic_DNA"/>
</dbReference>
<dbReference type="RefSeq" id="WP_012611028.1">
    <property type="nucleotide sequence ID" value="NC_011768.1"/>
</dbReference>
<dbReference type="SMR" id="B8FES0"/>
<dbReference type="KEGG" id="dal:Dalk_1900"/>
<dbReference type="eggNOG" id="COG0097">
    <property type="taxonomic scope" value="Bacteria"/>
</dbReference>
<dbReference type="HOGENOM" id="CLU_065464_1_2_7"/>
<dbReference type="Proteomes" id="UP000000739">
    <property type="component" value="Chromosome"/>
</dbReference>
<dbReference type="GO" id="GO:0022625">
    <property type="term" value="C:cytosolic large ribosomal subunit"/>
    <property type="evidence" value="ECO:0007669"/>
    <property type="project" value="TreeGrafter"/>
</dbReference>
<dbReference type="GO" id="GO:0019843">
    <property type="term" value="F:rRNA binding"/>
    <property type="evidence" value="ECO:0007669"/>
    <property type="project" value="UniProtKB-UniRule"/>
</dbReference>
<dbReference type="GO" id="GO:0003735">
    <property type="term" value="F:structural constituent of ribosome"/>
    <property type="evidence" value="ECO:0007669"/>
    <property type="project" value="InterPro"/>
</dbReference>
<dbReference type="GO" id="GO:0002181">
    <property type="term" value="P:cytoplasmic translation"/>
    <property type="evidence" value="ECO:0007669"/>
    <property type="project" value="TreeGrafter"/>
</dbReference>
<dbReference type="FunFam" id="3.90.930.12:FF:000001">
    <property type="entry name" value="50S ribosomal protein L6"/>
    <property type="match status" value="1"/>
</dbReference>
<dbReference type="Gene3D" id="3.90.930.12">
    <property type="entry name" value="Ribosomal protein L6, alpha-beta domain"/>
    <property type="match status" value="2"/>
</dbReference>
<dbReference type="HAMAP" id="MF_01365_B">
    <property type="entry name" value="Ribosomal_uL6_B"/>
    <property type="match status" value="1"/>
</dbReference>
<dbReference type="InterPro" id="IPR000702">
    <property type="entry name" value="Ribosomal_uL6-like"/>
</dbReference>
<dbReference type="InterPro" id="IPR036789">
    <property type="entry name" value="Ribosomal_uL6-like_a/b-dom_sf"/>
</dbReference>
<dbReference type="InterPro" id="IPR020040">
    <property type="entry name" value="Ribosomal_uL6_a/b-dom"/>
</dbReference>
<dbReference type="InterPro" id="IPR019906">
    <property type="entry name" value="Ribosomal_uL6_bac-type"/>
</dbReference>
<dbReference type="InterPro" id="IPR002358">
    <property type="entry name" value="Ribosomal_uL6_CS"/>
</dbReference>
<dbReference type="NCBIfam" id="TIGR03654">
    <property type="entry name" value="L6_bact"/>
    <property type="match status" value="1"/>
</dbReference>
<dbReference type="PANTHER" id="PTHR11655">
    <property type="entry name" value="60S/50S RIBOSOMAL PROTEIN L6/L9"/>
    <property type="match status" value="1"/>
</dbReference>
<dbReference type="PANTHER" id="PTHR11655:SF14">
    <property type="entry name" value="LARGE RIBOSOMAL SUBUNIT PROTEIN UL6M"/>
    <property type="match status" value="1"/>
</dbReference>
<dbReference type="Pfam" id="PF00347">
    <property type="entry name" value="Ribosomal_L6"/>
    <property type="match status" value="2"/>
</dbReference>
<dbReference type="PIRSF" id="PIRSF002162">
    <property type="entry name" value="Ribosomal_L6"/>
    <property type="match status" value="1"/>
</dbReference>
<dbReference type="PRINTS" id="PR00059">
    <property type="entry name" value="RIBOSOMALL6"/>
</dbReference>
<dbReference type="SUPFAM" id="SSF56053">
    <property type="entry name" value="Ribosomal protein L6"/>
    <property type="match status" value="2"/>
</dbReference>
<dbReference type="PROSITE" id="PS00525">
    <property type="entry name" value="RIBOSOMAL_L6_1"/>
    <property type="match status" value="1"/>
</dbReference>